<organism>
    <name type="scientific">Borrelia recurrentis (strain A1)</name>
    <dbReference type="NCBI Taxonomy" id="412418"/>
    <lineage>
        <taxon>Bacteria</taxon>
        <taxon>Pseudomonadati</taxon>
        <taxon>Spirochaetota</taxon>
        <taxon>Spirochaetia</taxon>
        <taxon>Spirochaetales</taxon>
        <taxon>Borreliaceae</taxon>
        <taxon>Borrelia</taxon>
    </lineage>
</organism>
<dbReference type="EMBL" id="CP000993">
    <property type="protein sequence ID" value="ACH94466.1"/>
    <property type="molecule type" value="Genomic_DNA"/>
</dbReference>
<dbReference type="RefSeq" id="WP_012538741.1">
    <property type="nucleotide sequence ID" value="NC_011244.1"/>
</dbReference>
<dbReference type="SMR" id="B5RR32"/>
<dbReference type="KEGG" id="bre:BRE_214"/>
<dbReference type="HOGENOM" id="CLU_074944_0_2_12"/>
<dbReference type="UniPathway" id="UPA00345"/>
<dbReference type="Proteomes" id="UP000000612">
    <property type="component" value="Chromosome"/>
</dbReference>
<dbReference type="GO" id="GO:0005737">
    <property type="term" value="C:cytoplasm"/>
    <property type="evidence" value="ECO:0007669"/>
    <property type="project" value="UniProtKB-SubCell"/>
</dbReference>
<dbReference type="GO" id="GO:0003746">
    <property type="term" value="F:translation elongation factor activity"/>
    <property type="evidence" value="ECO:0007669"/>
    <property type="project" value="UniProtKB-UniRule"/>
</dbReference>
<dbReference type="GO" id="GO:0043043">
    <property type="term" value="P:peptide biosynthetic process"/>
    <property type="evidence" value="ECO:0007669"/>
    <property type="project" value="InterPro"/>
</dbReference>
<dbReference type="CDD" id="cd04470">
    <property type="entry name" value="S1_EF-P_repeat_1"/>
    <property type="match status" value="1"/>
</dbReference>
<dbReference type="CDD" id="cd05794">
    <property type="entry name" value="S1_EF-P_repeat_2"/>
    <property type="match status" value="1"/>
</dbReference>
<dbReference type="FunFam" id="2.40.50.140:FF:000004">
    <property type="entry name" value="Elongation factor P"/>
    <property type="match status" value="1"/>
</dbReference>
<dbReference type="Gene3D" id="2.30.30.30">
    <property type="match status" value="1"/>
</dbReference>
<dbReference type="Gene3D" id="2.40.50.140">
    <property type="entry name" value="Nucleic acid-binding proteins"/>
    <property type="match status" value="2"/>
</dbReference>
<dbReference type="HAMAP" id="MF_00141">
    <property type="entry name" value="EF_P"/>
    <property type="match status" value="1"/>
</dbReference>
<dbReference type="InterPro" id="IPR015365">
    <property type="entry name" value="Elong-fact-P_C"/>
</dbReference>
<dbReference type="InterPro" id="IPR012340">
    <property type="entry name" value="NA-bd_OB-fold"/>
</dbReference>
<dbReference type="InterPro" id="IPR014722">
    <property type="entry name" value="Rib_uL2_dom2"/>
</dbReference>
<dbReference type="InterPro" id="IPR020599">
    <property type="entry name" value="Transl_elong_fac_P/YeiP"/>
</dbReference>
<dbReference type="InterPro" id="IPR013185">
    <property type="entry name" value="Transl_elong_KOW-like"/>
</dbReference>
<dbReference type="InterPro" id="IPR001059">
    <property type="entry name" value="Transl_elong_P/YeiP_cen"/>
</dbReference>
<dbReference type="InterPro" id="IPR011768">
    <property type="entry name" value="Transl_elongation_fac_P"/>
</dbReference>
<dbReference type="InterPro" id="IPR008991">
    <property type="entry name" value="Translation_prot_SH3-like_sf"/>
</dbReference>
<dbReference type="NCBIfam" id="TIGR00038">
    <property type="entry name" value="efp"/>
    <property type="match status" value="1"/>
</dbReference>
<dbReference type="NCBIfam" id="NF001810">
    <property type="entry name" value="PRK00529.1"/>
    <property type="match status" value="1"/>
</dbReference>
<dbReference type="PANTHER" id="PTHR30053">
    <property type="entry name" value="ELONGATION FACTOR P"/>
    <property type="match status" value="1"/>
</dbReference>
<dbReference type="PANTHER" id="PTHR30053:SF14">
    <property type="entry name" value="TRANSLATION ELONGATION FACTOR KOW-LIKE DOMAIN-CONTAINING PROTEIN"/>
    <property type="match status" value="1"/>
</dbReference>
<dbReference type="Pfam" id="PF01132">
    <property type="entry name" value="EFP"/>
    <property type="match status" value="1"/>
</dbReference>
<dbReference type="Pfam" id="PF08207">
    <property type="entry name" value="EFP_N"/>
    <property type="match status" value="1"/>
</dbReference>
<dbReference type="Pfam" id="PF09285">
    <property type="entry name" value="Elong-fact-P_C"/>
    <property type="match status" value="1"/>
</dbReference>
<dbReference type="PIRSF" id="PIRSF005901">
    <property type="entry name" value="EF-P"/>
    <property type="match status" value="1"/>
</dbReference>
<dbReference type="SMART" id="SM01185">
    <property type="entry name" value="EFP"/>
    <property type="match status" value="1"/>
</dbReference>
<dbReference type="SMART" id="SM00841">
    <property type="entry name" value="Elong-fact-P_C"/>
    <property type="match status" value="1"/>
</dbReference>
<dbReference type="SUPFAM" id="SSF50249">
    <property type="entry name" value="Nucleic acid-binding proteins"/>
    <property type="match status" value="2"/>
</dbReference>
<dbReference type="SUPFAM" id="SSF50104">
    <property type="entry name" value="Translation proteins SH3-like domain"/>
    <property type="match status" value="1"/>
</dbReference>
<name>EFP_BORRA</name>
<keyword id="KW-0963">Cytoplasm</keyword>
<keyword id="KW-0251">Elongation factor</keyword>
<keyword id="KW-0648">Protein biosynthesis</keyword>
<evidence type="ECO:0000255" key="1">
    <source>
        <dbReference type="HAMAP-Rule" id="MF_00141"/>
    </source>
</evidence>
<comment type="function">
    <text evidence="1">Involved in peptide bond synthesis. Stimulates efficient translation and peptide-bond synthesis on native or reconstituted 70S ribosomes in vitro. Probably functions indirectly by altering the affinity of the ribosome for aminoacyl-tRNA, thus increasing their reactivity as acceptors for peptidyl transferase.</text>
</comment>
<comment type="pathway">
    <text evidence="1">Protein biosynthesis; polypeptide chain elongation.</text>
</comment>
<comment type="subcellular location">
    <subcellularLocation>
        <location evidence="1">Cytoplasm</location>
    </subcellularLocation>
</comment>
<comment type="similarity">
    <text evidence="1">Belongs to the elongation factor P family.</text>
</comment>
<feature type="chain" id="PRO_1000096126" description="Elongation factor P">
    <location>
        <begin position="1"/>
        <end position="192"/>
    </location>
</feature>
<proteinExistence type="inferred from homology"/>
<accession>B5RR32</accession>
<gene>
    <name evidence="1" type="primary">efp</name>
    <name type="ordered locus">BRE_214</name>
</gene>
<reference key="1">
    <citation type="journal article" date="2008" name="PLoS Genet.">
        <title>The genome of Borrelia recurrentis, the agent of deadly louse-borne relapsing fever, is a degraded subset of tick-borne Borrelia duttonii.</title>
        <authorList>
            <person name="Lescot M."/>
            <person name="Audic S."/>
            <person name="Robert C."/>
            <person name="Nguyen T.T."/>
            <person name="Blanc G."/>
            <person name="Cutler S.J."/>
            <person name="Wincker P."/>
            <person name="Couloux A."/>
            <person name="Claverie J.-M."/>
            <person name="Raoult D."/>
            <person name="Drancourt M."/>
        </authorList>
    </citation>
    <scope>NUCLEOTIDE SEQUENCE [LARGE SCALE GENOMIC DNA]</scope>
    <source>
        <strain>A1</strain>
    </source>
</reference>
<protein>
    <recommendedName>
        <fullName evidence="1">Elongation factor P</fullName>
        <shortName evidence="1">EF-P</shortName>
    </recommendedName>
</protein>
<sequence>MSTIKSGDIDKGSFLLFKGMPHIVLEREFSKMGRGGSIVRLKLKNLKNKSVIKETLKGSDTVEEIEVLEVNSQYLYKDNESLIFMDLETYDQFSVNLRDVVNLEDKVLFLQEAEVYSLIKWGNEVIDLKLPPKVAFEVVDAEIAVKGDTVTNAMKNVTLHTDLVVKAPLFINIGDKILVNSETKEYAERVKV</sequence>